<protein>
    <recommendedName>
        <fullName>Actin-related protein 6</fullName>
        <shortName>mArp6</shortName>
    </recommendedName>
</protein>
<gene>
    <name type="primary">Actr6</name>
</gene>
<dbReference type="EMBL" id="AK008409">
    <property type="protein sequence ID" value="BAB25654.1"/>
    <property type="molecule type" value="mRNA"/>
</dbReference>
<dbReference type="EMBL" id="AK088571">
    <property type="protein sequence ID" value="BAC40429.1"/>
    <property type="molecule type" value="mRNA"/>
</dbReference>
<dbReference type="EMBL" id="BC062137">
    <property type="protein sequence ID" value="AAH62137.1"/>
    <property type="molecule type" value="mRNA"/>
</dbReference>
<dbReference type="CCDS" id="CCDS24118.1"/>
<dbReference type="RefSeq" id="NP_080190.1">
    <property type="nucleotide sequence ID" value="NM_025914.2"/>
</dbReference>
<dbReference type="SMR" id="Q9D864"/>
<dbReference type="BioGRID" id="211880">
    <property type="interactions" value="1"/>
</dbReference>
<dbReference type="ComplexPortal" id="CPX-976">
    <property type="entry name" value="SRCAP chromatin remodeling complex"/>
</dbReference>
<dbReference type="FunCoup" id="Q9D864">
    <property type="interactions" value="751"/>
</dbReference>
<dbReference type="IntAct" id="Q9D864">
    <property type="interactions" value="1"/>
</dbReference>
<dbReference type="STRING" id="10090.ENSMUSP00000020109"/>
<dbReference type="iPTMnet" id="Q9D864"/>
<dbReference type="PhosphoSitePlus" id="Q9D864"/>
<dbReference type="PaxDb" id="10090-ENSMUSP00000020109"/>
<dbReference type="PeptideAtlas" id="Q9D864"/>
<dbReference type="ProteomicsDB" id="281802"/>
<dbReference type="Pumba" id="Q9D864"/>
<dbReference type="DNASU" id="67019"/>
<dbReference type="GeneID" id="67019"/>
<dbReference type="KEGG" id="mmu:67019"/>
<dbReference type="UCSC" id="uc007gss.1">
    <property type="organism name" value="mouse"/>
</dbReference>
<dbReference type="AGR" id="MGI:1914269"/>
<dbReference type="CTD" id="64431"/>
<dbReference type="MGI" id="MGI:1914269">
    <property type="gene designation" value="Actr6"/>
</dbReference>
<dbReference type="eggNOG" id="KOG0680">
    <property type="taxonomic scope" value="Eukaryota"/>
</dbReference>
<dbReference type="InParanoid" id="Q9D864"/>
<dbReference type="OrthoDB" id="6220758at2759"/>
<dbReference type="PhylomeDB" id="Q9D864"/>
<dbReference type="TreeFam" id="TF105780"/>
<dbReference type="BioGRID-ORCS" id="67019">
    <property type="hits" value="25 hits in 82 CRISPR screens"/>
</dbReference>
<dbReference type="ChiTaRS" id="Actr6">
    <property type="organism name" value="mouse"/>
</dbReference>
<dbReference type="PRO" id="PR:Q9D864"/>
<dbReference type="Proteomes" id="UP000000589">
    <property type="component" value="Unplaced"/>
</dbReference>
<dbReference type="RNAct" id="Q9D864">
    <property type="molecule type" value="protein"/>
</dbReference>
<dbReference type="GO" id="GO:0005737">
    <property type="term" value="C:cytoplasm"/>
    <property type="evidence" value="ECO:0007669"/>
    <property type="project" value="UniProtKB-KW"/>
</dbReference>
<dbReference type="GO" id="GO:0005856">
    <property type="term" value="C:cytoskeleton"/>
    <property type="evidence" value="ECO:0007669"/>
    <property type="project" value="UniProtKB-SubCell"/>
</dbReference>
<dbReference type="GO" id="GO:0005730">
    <property type="term" value="C:nucleolus"/>
    <property type="evidence" value="ECO:0000250"/>
    <property type="project" value="UniProtKB"/>
</dbReference>
<dbReference type="GO" id="GO:0000786">
    <property type="term" value="C:nucleosome"/>
    <property type="evidence" value="ECO:0000303"/>
    <property type="project" value="ComplexPortal"/>
</dbReference>
<dbReference type="GO" id="GO:0005634">
    <property type="term" value="C:nucleus"/>
    <property type="evidence" value="ECO:0000250"/>
    <property type="project" value="AgBase"/>
</dbReference>
<dbReference type="GO" id="GO:0016479">
    <property type="term" value="P:negative regulation of transcription by RNA polymerase I"/>
    <property type="evidence" value="ECO:0000250"/>
    <property type="project" value="UniProtKB"/>
</dbReference>
<dbReference type="GO" id="GO:0007000">
    <property type="term" value="P:nucleolus organization"/>
    <property type="evidence" value="ECO:0000250"/>
    <property type="project" value="UniProtKB"/>
</dbReference>
<dbReference type="GO" id="GO:0045943">
    <property type="term" value="P:positive regulation of transcription by RNA polymerase I"/>
    <property type="evidence" value="ECO:0000250"/>
    <property type="project" value="UniProtKB"/>
</dbReference>
<dbReference type="GO" id="GO:0006355">
    <property type="term" value="P:regulation of DNA-templated transcription"/>
    <property type="evidence" value="ECO:0000303"/>
    <property type="project" value="ComplexPortal"/>
</dbReference>
<dbReference type="CDD" id="cd10210">
    <property type="entry name" value="ASKHA_NBD_Arp6"/>
    <property type="match status" value="1"/>
</dbReference>
<dbReference type="FunFam" id="2.30.36.70:FF:000003">
    <property type="entry name" value="Actin-related protein 6"/>
    <property type="match status" value="1"/>
</dbReference>
<dbReference type="FunFam" id="3.30.420.40:FF:000599">
    <property type="entry name" value="Actin-related protein 6"/>
    <property type="match status" value="1"/>
</dbReference>
<dbReference type="FunFam" id="3.30.420.40:FF:000601">
    <property type="entry name" value="Actin-related protein 6"/>
    <property type="match status" value="1"/>
</dbReference>
<dbReference type="FunFam" id="3.30.420.40:FF:000602">
    <property type="entry name" value="Actin-related protein 6"/>
    <property type="match status" value="1"/>
</dbReference>
<dbReference type="FunFam" id="3.90.640.10:FF:000014">
    <property type="entry name" value="Putative actin-related protein 6"/>
    <property type="match status" value="1"/>
</dbReference>
<dbReference type="Gene3D" id="3.30.420.40">
    <property type="match status" value="2"/>
</dbReference>
<dbReference type="Gene3D" id="2.30.36.70">
    <property type="entry name" value="Actin, Chain A, domain 2"/>
    <property type="match status" value="1"/>
</dbReference>
<dbReference type="Gene3D" id="3.90.640.10">
    <property type="entry name" value="Actin, Chain A, domain 4"/>
    <property type="match status" value="1"/>
</dbReference>
<dbReference type="InterPro" id="IPR004000">
    <property type="entry name" value="Actin"/>
</dbReference>
<dbReference type="InterPro" id="IPR043129">
    <property type="entry name" value="ATPase_NBD"/>
</dbReference>
<dbReference type="PANTHER" id="PTHR11937">
    <property type="entry name" value="ACTIN"/>
    <property type="match status" value="1"/>
</dbReference>
<dbReference type="Pfam" id="PF00022">
    <property type="entry name" value="Actin"/>
    <property type="match status" value="1"/>
</dbReference>
<dbReference type="SMART" id="SM00268">
    <property type="entry name" value="ACTIN"/>
    <property type="match status" value="1"/>
</dbReference>
<dbReference type="SUPFAM" id="SSF53067">
    <property type="entry name" value="Actin-like ATPase domain"/>
    <property type="match status" value="2"/>
</dbReference>
<accession>Q9D864</accession>
<accession>Q8BTV8</accession>
<keyword id="KW-0007">Acetylation</keyword>
<keyword id="KW-0010">Activator</keyword>
<keyword id="KW-0963">Cytoplasm</keyword>
<keyword id="KW-0206">Cytoskeleton</keyword>
<keyword id="KW-0539">Nucleus</keyword>
<keyword id="KW-1185">Reference proteome</keyword>
<keyword id="KW-0678">Repressor</keyword>
<keyword id="KW-0804">Transcription</keyword>
<keyword id="KW-0805">Transcription regulation</keyword>
<feature type="initiator methionine" description="Removed" evidence="3">
    <location>
        <position position="1"/>
    </location>
</feature>
<feature type="chain" id="PRO_0000089106" description="Actin-related protein 6">
    <location>
        <begin position="2"/>
        <end position="396"/>
    </location>
</feature>
<feature type="modified residue" description="N-acetylthreonine" evidence="3">
    <location>
        <position position="2"/>
    </location>
</feature>
<feature type="modified residue" description="N6-acetyllysine" evidence="5">
    <location>
        <position position="260"/>
    </location>
</feature>
<feature type="sequence conflict" description="In Ref. 1; BAC40429." evidence="4" ref="1">
    <original>P</original>
    <variation>T</variation>
    <location>
        <position position="26"/>
    </location>
</feature>
<feature type="sequence conflict" description="In Ref. 1; BAB25654." evidence="4" ref="1">
    <original>S</original>
    <variation>F</variation>
    <location>
        <position position="263"/>
    </location>
</feature>
<evidence type="ECO:0000250" key="1">
    <source>
        <dbReference type="UniProtKB" id="P45890"/>
    </source>
</evidence>
<evidence type="ECO:0000250" key="2">
    <source>
        <dbReference type="UniProtKB" id="Q9DEE9"/>
    </source>
</evidence>
<evidence type="ECO:0000250" key="3">
    <source>
        <dbReference type="UniProtKB" id="Q9GZN1"/>
    </source>
</evidence>
<evidence type="ECO:0000305" key="4"/>
<evidence type="ECO:0007744" key="5">
    <source>
    </source>
</evidence>
<organism>
    <name type="scientific">Mus musculus</name>
    <name type="common">Mouse</name>
    <dbReference type="NCBI Taxonomy" id="10090"/>
    <lineage>
        <taxon>Eukaryota</taxon>
        <taxon>Metazoa</taxon>
        <taxon>Chordata</taxon>
        <taxon>Craniata</taxon>
        <taxon>Vertebrata</taxon>
        <taxon>Euteleostomi</taxon>
        <taxon>Mammalia</taxon>
        <taxon>Eutheria</taxon>
        <taxon>Euarchontoglires</taxon>
        <taxon>Glires</taxon>
        <taxon>Rodentia</taxon>
        <taxon>Myomorpha</taxon>
        <taxon>Muroidea</taxon>
        <taxon>Muridae</taxon>
        <taxon>Murinae</taxon>
        <taxon>Mus</taxon>
        <taxon>Mus</taxon>
    </lineage>
</organism>
<reference key="1">
    <citation type="journal article" date="2005" name="Science">
        <title>The transcriptional landscape of the mammalian genome.</title>
        <authorList>
            <person name="Carninci P."/>
            <person name="Kasukawa T."/>
            <person name="Katayama S."/>
            <person name="Gough J."/>
            <person name="Frith M.C."/>
            <person name="Maeda N."/>
            <person name="Oyama R."/>
            <person name="Ravasi T."/>
            <person name="Lenhard B."/>
            <person name="Wells C."/>
            <person name="Kodzius R."/>
            <person name="Shimokawa K."/>
            <person name="Bajic V.B."/>
            <person name="Brenner S.E."/>
            <person name="Batalov S."/>
            <person name="Forrest A.R."/>
            <person name="Zavolan M."/>
            <person name="Davis M.J."/>
            <person name="Wilming L.G."/>
            <person name="Aidinis V."/>
            <person name="Allen J.E."/>
            <person name="Ambesi-Impiombato A."/>
            <person name="Apweiler R."/>
            <person name="Aturaliya R.N."/>
            <person name="Bailey T.L."/>
            <person name="Bansal M."/>
            <person name="Baxter L."/>
            <person name="Beisel K.W."/>
            <person name="Bersano T."/>
            <person name="Bono H."/>
            <person name="Chalk A.M."/>
            <person name="Chiu K.P."/>
            <person name="Choudhary V."/>
            <person name="Christoffels A."/>
            <person name="Clutterbuck D.R."/>
            <person name="Crowe M.L."/>
            <person name="Dalla E."/>
            <person name="Dalrymple B.P."/>
            <person name="de Bono B."/>
            <person name="Della Gatta G."/>
            <person name="di Bernardo D."/>
            <person name="Down T."/>
            <person name="Engstrom P."/>
            <person name="Fagiolini M."/>
            <person name="Faulkner G."/>
            <person name="Fletcher C.F."/>
            <person name="Fukushima T."/>
            <person name="Furuno M."/>
            <person name="Futaki S."/>
            <person name="Gariboldi M."/>
            <person name="Georgii-Hemming P."/>
            <person name="Gingeras T.R."/>
            <person name="Gojobori T."/>
            <person name="Green R.E."/>
            <person name="Gustincich S."/>
            <person name="Harbers M."/>
            <person name="Hayashi Y."/>
            <person name="Hensch T.K."/>
            <person name="Hirokawa N."/>
            <person name="Hill D."/>
            <person name="Huminiecki L."/>
            <person name="Iacono M."/>
            <person name="Ikeo K."/>
            <person name="Iwama A."/>
            <person name="Ishikawa T."/>
            <person name="Jakt M."/>
            <person name="Kanapin A."/>
            <person name="Katoh M."/>
            <person name="Kawasawa Y."/>
            <person name="Kelso J."/>
            <person name="Kitamura H."/>
            <person name="Kitano H."/>
            <person name="Kollias G."/>
            <person name="Krishnan S.P."/>
            <person name="Kruger A."/>
            <person name="Kummerfeld S.K."/>
            <person name="Kurochkin I.V."/>
            <person name="Lareau L.F."/>
            <person name="Lazarevic D."/>
            <person name="Lipovich L."/>
            <person name="Liu J."/>
            <person name="Liuni S."/>
            <person name="McWilliam S."/>
            <person name="Madan Babu M."/>
            <person name="Madera M."/>
            <person name="Marchionni L."/>
            <person name="Matsuda H."/>
            <person name="Matsuzawa S."/>
            <person name="Miki H."/>
            <person name="Mignone F."/>
            <person name="Miyake S."/>
            <person name="Morris K."/>
            <person name="Mottagui-Tabar S."/>
            <person name="Mulder N."/>
            <person name="Nakano N."/>
            <person name="Nakauchi H."/>
            <person name="Ng P."/>
            <person name="Nilsson R."/>
            <person name="Nishiguchi S."/>
            <person name="Nishikawa S."/>
            <person name="Nori F."/>
            <person name="Ohara O."/>
            <person name="Okazaki Y."/>
            <person name="Orlando V."/>
            <person name="Pang K.C."/>
            <person name="Pavan W.J."/>
            <person name="Pavesi G."/>
            <person name="Pesole G."/>
            <person name="Petrovsky N."/>
            <person name="Piazza S."/>
            <person name="Reed J."/>
            <person name="Reid J.F."/>
            <person name="Ring B.Z."/>
            <person name="Ringwald M."/>
            <person name="Rost B."/>
            <person name="Ruan Y."/>
            <person name="Salzberg S.L."/>
            <person name="Sandelin A."/>
            <person name="Schneider C."/>
            <person name="Schoenbach C."/>
            <person name="Sekiguchi K."/>
            <person name="Semple C.A."/>
            <person name="Seno S."/>
            <person name="Sessa L."/>
            <person name="Sheng Y."/>
            <person name="Shibata Y."/>
            <person name="Shimada H."/>
            <person name="Shimada K."/>
            <person name="Silva D."/>
            <person name="Sinclair B."/>
            <person name="Sperling S."/>
            <person name="Stupka E."/>
            <person name="Sugiura K."/>
            <person name="Sultana R."/>
            <person name="Takenaka Y."/>
            <person name="Taki K."/>
            <person name="Tammoja K."/>
            <person name="Tan S.L."/>
            <person name="Tang S."/>
            <person name="Taylor M.S."/>
            <person name="Tegner J."/>
            <person name="Teichmann S.A."/>
            <person name="Ueda H.R."/>
            <person name="van Nimwegen E."/>
            <person name="Verardo R."/>
            <person name="Wei C.L."/>
            <person name="Yagi K."/>
            <person name="Yamanishi H."/>
            <person name="Zabarovsky E."/>
            <person name="Zhu S."/>
            <person name="Zimmer A."/>
            <person name="Hide W."/>
            <person name="Bult C."/>
            <person name="Grimmond S.M."/>
            <person name="Teasdale R.D."/>
            <person name="Liu E.T."/>
            <person name="Brusic V."/>
            <person name="Quackenbush J."/>
            <person name="Wahlestedt C."/>
            <person name="Mattick J.S."/>
            <person name="Hume D.A."/>
            <person name="Kai C."/>
            <person name="Sasaki D."/>
            <person name="Tomaru Y."/>
            <person name="Fukuda S."/>
            <person name="Kanamori-Katayama M."/>
            <person name="Suzuki M."/>
            <person name="Aoki J."/>
            <person name="Arakawa T."/>
            <person name="Iida J."/>
            <person name="Imamura K."/>
            <person name="Itoh M."/>
            <person name="Kato T."/>
            <person name="Kawaji H."/>
            <person name="Kawagashira N."/>
            <person name="Kawashima T."/>
            <person name="Kojima M."/>
            <person name="Kondo S."/>
            <person name="Konno H."/>
            <person name="Nakano K."/>
            <person name="Ninomiya N."/>
            <person name="Nishio T."/>
            <person name="Okada M."/>
            <person name="Plessy C."/>
            <person name="Shibata K."/>
            <person name="Shiraki T."/>
            <person name="Suzuki S."/>
            <person name="Tagami M."/>
            <person name="Waki K."/>
            <person name="Watahiki A."/>
            <person name="Okamura-Oho Y."/>
            <person name="Suzuki H."/>
            <person name="Kawai J."/>
            <person name="Hayashizaki Y."/>
        </authorList>
    </citation>
    <scope>NUCLEOTIDE SEQUENCE [LARGE SCALE MRNA]</scope>
    <source>
        <strain>C57BL/6J</strain>
        <strain>NOD</strain>
        <tissue>Small intestine</tissue>
        <tissue>Thymus</tissue>
    </source>
</reference>
<reference key="2">
    <citation type="journal article" date="2004" name="Genome Res.">
        <title>The status, quality, and expansion of the NIH full-length cDNA project: the Mammalian Gene Collection (MGC).</title>
        <authorList>
            <consortium name="The MGC Project Team"/>
        </authorList>
    </citation>
    <scope>NUCLEOTIDE SEQUENCE [LARGE SCALE MRNA]</scope>
    <source>
        <tissue>Limb</tissue>
    </source>
</reference>
<reference key="3">
    <citation type="journal article" date="2013" name="Mol. Cell">
        <title>SIRT5-mediated lysine desuccinylation impacts diverse metabolic pathways.</title>
        <authorList>
            <person name="Park J."/>
            <person name="Chen Y."/>
            <person name="Tishkoff D.X."/>
            <person name="Peng C."/>
            <person name="Tan M."/>
            <person name="Dai L."/>
            <person name="Xie Z."/>
            <person name="Zhang Y."/>
            <person name="Zwaans B.M."/>
            <person name="Skinner M.E."/>
            <person name="Lombard D.B."/>
            <person name="Zhao Y."/>
        </authorList>
    </citation>
    <scope>ACETYLATION [LARGE SCALE ANALYSIS] AT LYS-260</scope>
    <scope>IDENTIFICATION BY MASS SPECTROMETRY [LARGE SCALE ANALYSIS]</scope>
    <source>
        <tissue>Embryonic fibroblast</tissue>
    </source>
</reference>
<comment type="function">
    <text evidence="2 3">Required for formation and/or maintenance of proper nucleolar structure and function (By similarity). Plays a dual role in the regulation of ribosomal DNA (rDNA) transcription (By similarity). In the presence of high glucose, maintains active rDNA transcription through H2A.Z deposition and under glucose starvation, is required for the repression of rDNA transcription, and this function may be independent of H2A.Z (By similarity).</text>
</comment>
<comment type="subunit">
    <text evidence="3">Component of the chromatin-remodeling SRCAP complex composed of at least SRCAP, DMAP1, RUVBL1, RUVBL2, ACTL6A, YEATS4, ACTR6 and ZNHIT1. Interacts with CBX1, CBX3 and CBX5.</text>
</comment>
<comment type="subcellular location">
    <subcellularLocation>
        <location evidence="1">Cytoplasm</location>
        <location evidence="1">Cytoskeleton</location>
    </subcellularLocation>
    <subcellularLocation>
        <location evidence="3">Nucleus</location>
    </subcellularLocation>
    <subcellularLocation>
        <location evidence="3">Nucleus</location>
        <location evidence="3">Nucleolus</location>
    </subcellularLocation>
    <text evidence="3">Colocalizes with HP1 family proteins at pericentric heterochromatin.</text>
</comment>
<comment type="similarity">
    <text evidence="4">Belongs to the actin family. ARP6 subfamily.</text>
</comment>
<sequence length="396" mass="45785">MTTLVLDNGAYNAKIGYSHDSVSVIPNCQFRSKTARLKTFTANQIDEIKDPSGLFYILPFQKGYLVNWDVQRQVWDYLFGKEMYQVDFLDTNIIITEPYFNFTSIQESMNEILFEEYQFQAVLRVNAGALSAHRYFRDNPSELCCIIVDSGYSFTHIVPYCRSKKKKEAIIRINVGGKLLTNHLKEIISYRQLHVMDETHVINQVKEDVCYVSQDFYRDMDIAKLKGEDNTVMIDYVLPDFSTIKKGFCKPREEMVLSGKYKSGEQILRLANERFAVPEILFNPSDIGIQEMGIPEAIVYSIQNLPEEMQPHFFKNIVLTGGNSLFPGFRERVYSEVRCLTPTDYDVSVVLPENPITYSWEGGKLISENDDFEDMVVTREDYEENGHSVCEEKFDI</sequence>
<proteinExistence type="evidence at protein level"/>
<name>ARP6_MOUSE</name>